<gene>
    <name type="primary">IARS2</name>
    <name type="ORF">RCJMB04_12b19</name>
</gene>
<proteinExistence type="evidence at transcript level"/>
<feature type="transit peptide" description="Mitochondrion" evidence="2">
    <location>
        <begin position="1"/>
        <end position="27"/>
    </location>
</feature>
<feature type="chain" id="PRO_0000233338" description="Isoleucine--tRNA ligase, mitochondrial">
    <location>
        <begin position="28"/>
        <end position="1000"/>
    </location>
</feature>
<feature type="short sequence motif" description="'HIGH' region" evidence="3">
    <location>
        <begin position="102"/>
        <end position="112"/>
    </location>
</feature>
<feature type="short sequence motif" description="'KMSKS' region" evidence="3">
    <location>
        <begin position="649"/>
        <end position="653"/>
    </location>
</feature>
<feature type="binding site" evidence="1">
    <location>
        <position position="649"/>
    </location>
    <ligand>
        <name>ATP</name>
        <dbReference type="ChEBI" id="CHEBI:30616"/>
    </ligand>
</feature>
<feature type="binding site" evidence="1">
    <location>
        <position position="652"/>
    </location>
    <ligand>
        <name>ATP</name>
        <dbReference type="ChEBI" id="CHEBI:30616"/>
    </ligand>
</feature>
<protein>
    <recommendedName>
        <fullName evidence="3">Isoleucine--tRNA ligase, mitochondrial</fullName>
        <ecNumber evidence="1">6.1.1.5</ecNumber>
    </recommendedName>
    <alternativeName>
        <fullName>Isoleucyl-tRNA synthetase</fullName>
        <shortName>IleRS</shortName>
    </alternativeName>
</protein>
<evidence type="ECO:0000250" key="1">
    <source>
        <dbReference type="UniProtKB" id="P00956"/>
    </source>
</evidence>
<evidence type="ECO:0000255" key="2"/>
<evidence type="ECO:0000305" key="3"/>
<accession>Q5ZKA2</accession>
<dbReference type="EC" id="6.1.1.5" evidence="1"/>
<dbReference type="EMBL" id="AJ720182">
    <property type="protein sequence ID" value="CAG31841.1"/>
    <property type="molecule type" value="mRNA"/>
</dbReference>
<dbReference type="RefSeq" id="NP_001006397.1">
    <property type="nucleotide sequence ID" value="NM_001006397.2"/>
</dbReference>
<dbReference type="SMR" id="Q5ZKA2"/>
<dbReference type="FunCoup" id="Q5ZKA2">
    <property type="interactions" value="1924"/>
</dbReference>
<dbReference type="STRING" id="9031.ENSGALP00000061888"/>
<dbReference type="PaxDb" id="9031-ENSGALP00000015565"/>
<dbReference type="Ensembl" id="ENSGALT00010038696.1">
    <property type="protein sequence ID" value="ENSGALP00010022380.1"/>
    <property type="gene ID" value="ENSGALG00010016087.1"/>
</dbReference>
<dbReference type="GeneID" id="421346"/>
<dbReference type="KEGG" id="gga:421346"/>
<dbReference type="CTD" id="55699"/>
<dbReference type="VEuPathDB" id="HostDB:geneid_421346"/>
<dbReference type="eggNOG" id="KOG0433">
    <property type="taxonomic scope" value="Eukaryota"/>
</dbReference>
<dbReference type="GeneTree" id="ENSGT00550000074910"/>
<dbReference type="InParanoid" id="Q5ZKA2"/>
<dbReference type="OMA" id="HCWRCKT"/>
<dbReference type="OrthoDB" id="10264412at2759"/>
<dbReference type="PhylomeDB" id="Q5ZKA2"/>
<dbReference type="PRO" id="PR:Q5ZKA2"/>
<dbReference type="Proteomes" id="UP000000539">
    <property type="component" value="Chromosome 3"/>
</dbReference>
<dbReference type="GO" id="GO:0005759">
    <property type="term" value="C:mitochondrial matrix"/>
    <property type="evidence" value="ECO:0007669"/>
    <property type="project" value="UniProtKB-SubCell"/>
</dbReference>
<dbReference type="GO" id="GO:0005739">
    <property type="term" value="C:mitochondrion"/>
    <property type="evidence" value="ECO:0000318"/>
    <property type="project" value="GO_Central"/>
</dbReference>
<dbReference type="GO" id="GO:0002161">
    <property type="term" value="F:aminoacyl-tRNA deacylase activity"/>
    <property type="evidence" value="ECO:0007669"/>
    <property type="project" value="InterPro"/>
</dbReference>
<dbReference type="GO" id="GO:0005524">
    <property type="term" value="F:ATP binding"/>
    <property type="evidence" value="ECO:0007669"/>
    <property type="project" value="UniProtKB-KW"/>
</dbReference>
<dbReference type="GO" id="GO:0004822">
    <property type="term" value="F:isoleucine-tRNA ligase activity"/>
    <property type="evidence" value="ECO:0000318"/>
    <property type="project" value="GO_Central"/>
</dbReference>
<dbReference type="GO" id="GO:0000049">
    <property type="term" value="F:tRNA binding"/>
    <property type="evidence" value="ECO:0007669"/>
    <property type="project" value="InterPro"/>
</dbReference>
<dbReference type="GO" id="GO:0006428">
    <property type="term" value="P:isoleucyl-tRNA aminoacylation"/>
    <property type="evidence" value="ECO:0000318"/>
    <property type="project" value="GO_Central"/>
</dbReference>
<dbReference type="GO" id="GO:0032543">
    <property type="term" value="P:mitochondrial translation"/>
    <property type="evidence" value="ECO:0000318"/>
    <property type="project" value="GO_Central"/>
</dbReference>
<dbReference type="CDD" id="cd07960">
    <property type="entry name" value="Anticodon_Ia_Ile_BEm"/>
    <property type="match status" value="1"/>
</dbReference>
<dbReference type="FunFam" id="3.40.50.620:FF:000152">
    <property type="entry name" value="Isoleucine--tRNA ligase"/>
    <property type="match status" value="1"/>
</dbReference>
<dbReference type="FunFam" id="1.10.10.830:FF:000002">
    <property type="entry name" value="Isoleucine--tRNA ligase, mitochondrial"/>
    <property type="match status" value="1"/>
</dbReference>
<dbReference type="FunFam" id="1.10.730.20:FF:000002">
    <property type="entry name" value="isoleucine--tRNA ligase, mitochondrial"/>
    <property type="match status" value="1"/>
</dbReference>
<dbReference type="FunFam" id="3.90.740.10:FF:000009">
    <property type="entry name" value="Isoleucyl-tRNA synthetase 2, mitochondrial"/>
    <property type="match status" value="1"/>
</dbReference>
<dbReference type="Gene3D" id="1.10.730.20">
    <property type="match status" value="1"/>
</dbReference>
<dbReference type="Gene3D" id="3.40.50.620">
    <property type="entry name" value="HUPs"/>
    <property type="match status" value="2"/>
</dbReference>
<dbReference type="Gene3D" id="1.10.10.830">
    <property type="entry name" value="Ile-tRNA synthetase CP2 domain-like"/>
    <property type="match status" value="1"/>
</dbReference>
<dbReference type="HAMAP" id="MF_02002">
    <property type="entry name" value="Ile_tRNA_synth_type1"/>
    <property type="match status" value="1"/>
</dbReference>
<dbReference type="InterPro" id="IPR001412">
    <property type="entry name" value="aa-tRNA-synth_I_CS"/>
</dbReference>
<dbReference type="InterPro" id="IPR002300">
    <property type="entry name" value="aa-tRNA-synth_Ia"/>
</dbReference>
<dbReference type="InterPro" id="IPR033708">
    <property type="entry name" value="Anticodon_Ile_BEm"/>
</dbReference>
<dbReference type="InterPro" id="IPR002301">
    <property type="entry name" value="Ile-tRNA-ligase"/>
</dbReference>
<dbReference type="InterPro" id="IPR023585">
    <property type="entry name" value="Ile-tRNA-ligase_type1"/>
</dbReference>
<dbReference type="InterPro" id="IPR050081">
    <property type="entry name" value="Ile-tRNA_ligase"/>
</dbReference>
<dbReference type="InterPro" id="IPR013155">
    <property type="entry name" value="M/V/L/I-tRNA-synth_anticd-bd"/>
</dbReference>
<dbReference type="InterPro" id="IPR014729">
    <property type="entry name" value="Rossmann-like_a/b/a_fold"/>
</dbReference>
<dbReference type="InterPro" id="IPR009080">
    <property type="entry name" value="tRNAsynth_Ia_anticodon-bd"/>
</dbReference>
<dbReference type="InterPro" id="IPR009008">
    <property type="entry name" value="Val/Leu/Ile-tRNA-synth_edit"/>
</dbReference>
<dbReference type="NCBIfam" id="TIGR00392">
    <property type="entry name" value="ileS"/>
    <property type="match status" value="1"/>
</dbReference>
<dbReference type="PANTHER" id="PTHR42765:SF1">
    <property type="entry name" value="ISOLEUCINE--TRNA LIGASE, MITOCHONDRIAL"/>
    <property type="match status" value="1"/>
</dbReference>
<dbReference type="PANTHER" id="PTHR42765">
    <property type="entry name" value="SOLEUCYL-TRNA SYNTHETASE"/>
    <property type="match status" value="1"/>
</dbReference>
<dbReference type="Pfam" id="PF08264">
    <property type="entry name" value="Anticodon_1"/>
    <property type="match status" value="1"/>
</dbReference>
<dbReference type="Pfam" id="PF00133">
    <property type="entry name" value="tRNA-synt_1"/>
    <property type="match status" value="1"/>
</dbReference>
<dbReference type="PRINTS" id="PR00984">
    <property type="entry name" value="TRNASYNTHILE"/>
</dbReference>
<dbReference type="SUPFAM" id="SSF47323">
    <property type="entry name" value="Anticodon-binding domain of a subclass of class I aminoacyl-tRNA synthetases"/>
    <property type="match status" value="1"/>
</dbReference>
<dbReference type="SUPFAM" id="SSF52374">
    <property type="entry name" value="Nucleotidylyl transferase"/>
    <property type="match status" value="1"/>
</dbReference>
<dbReference type="SUPFAM" id="SSF50677">
    <property type="entry name" value="ValRS/IleRS/LeuRS editing domain"/>
    <property type="match status" value="1"/>
</dbReference>
<dbReference type="PROSITE" id="PS00178">
    <property type="entry name" value="AA_TRNA_LIGASE_I"/>
    <property type="match status" value="1"/>
</dbReference>
<reference key="1">
    <citation type="journal article" date="2005" name="Genome Biol.">
        <title>Full-length cDNAs from chicken bursal lymphocytes to facilitate gene function analysis.</title>
        <authorList>
            <person name="Caldwell R.B."/>
            <person name="Kierzek A.M."/>
            <person name="Arakawa H."/>
            <person name="Bezzubov Y."/>
            <person name="Zaim J."/>
            <person name="Fiedler P."/>
            <person name="Kutter S."/>
            <person name="Blagodatski A."/>
            <person name="Kostovska D."/>
            <person name="Koter M."/>
            <person name="Plachy J."/>
            <person name="Carninci P."/>
            <person name="Hayashizaki Y."/>
            <person name="Buerstedde J.-M."/>
        </authorList>
    </citation>
    <scope>NUCLEOTIDE SEQUENCE [LARGE SCALE MRNA]</scope>
    <source>
        <strain>CB</strain>
        <tissue>Bursa of Fabricius</tissue>
    </source>
</reference>
<name>SYIM_CHICK</name>
<sequence>MLGAWRAAPRLRLRARFGVASVWARSAASEANSRRPAEESRQDSQYRDTVLLPHSRFAAQLPGRLQPDTELETQQKSGFLELYSWQRQRKAKQEFCLHDGPPYANGDPHVGHALNKILKDITNRFHMMRGYKVHYVPGWDCHGLPIELKALSEVKGAENLSPVEIRQKAKEFAERAIEKQKAAFIRWGIMADWANCYRTFDPKYEANQLRVFHKMYDKGFIYQDYKPVFWSPSAKTALAEAELEYNEQHVSRSVYMKFPLLKSPPKLASVIDGSSPASVLVWTTQPWTVPANQAVCYMPDAEYSVVKCATTGEHLILAADRVESTAAVLDTQFEVISTCKGVDLADGSCAHPTIAGRVSPLLPANHVTMTKGTGLVHTAPAHGMEDYNVASHHQLPTECLVDESGHFTEAAGPELKNKNVLEEGNEAVIKMLQAAGSLLKEEKYVHSYPYDWRTKKPMIIRASKQWFVNTANVKATAQEALKKVKIIPTSAVNRMLEMLDRRTFWCISRQRCWGVPIPVFYQKDTGESLINSETIADVIKIVEQQGTDAWWTLPIEQLLSKEAVAKAGGHNVLDYVKGQDVLDIWFDSGTSWAHVLEGAEQRADVYLEGKDQLGGWFQSSLLTSVATRKKAPYKTLVVHGFTLGEKGEKMSKSIGNVVDPDVVINGGDDHTKDPPYGADVLRWWVAESNVFTEVLIGPVVLNAARDDINKLRNTLRFMLGNMAGFNPETDSIPPSEMYIVDQYMLHLLQDYGSKVTEAYKEYDYSKVVRLLQAFCSRNLSNFYFSIIKDRLYCEEEKDPKRRSCQTVLAEALDVVVRSFAPILPHLAEEVFQHLPYKKDSEGVFRTGWINASSGWKKPGIEEAIEGACAMRDSFLGSISGKNALEYEVIIVIEPGLLFELMEALQAEESSRVSQLNEIMMASQTTLLSEIPKETPADANIVKGNFLINLEGGDIREESSYQVIALPTTKAKCPRCRRYTSDSSSTPCPRCLKVIAGKGST</sequence>
<comment type="function">
    <text evidence="1">Aminoacyl-tRNA synthetase that catalyzes the specific attachment of isoleucine to its cognate tRNA (tRNA(Ile)).</text>
</comment>
<comment type="catalytic activity">
    <reaction evidence="1">
        <text>tRNA(Ile) + L-isoleucine + ATP = L-isoleucyl-tRNA(Ile) + AMP + diphosphate</text>
        <dbReference type="Rhea" id="RHEA:11060"/>
        <dbReference type="Rhea" id="RHEA-COMP:9666"/>
        <dbReference type="Rhea" id="RHEA-COMP:9695"/>
        <dbReference type="ChEBI" id="CHEBI:30616"/>
        <dbReference type="ChEBI" id="CHEBI:33019"/>
        <dbReference type="ChEBI" id="CHEBI:58045"/>
        <dbReference type="ChEBI" id="CHEBI:78442"/>
        <dbReference type="ChEBI" id="CHEBI:78528"/>
        <dbReference type="ChEBI" id="CHEBI:456215"/>
        <dbReference type="EC" id="6.1.1.5"/>
    </reaction>
    <physiologicalReaction direction="left-to-right" evidence="3">
        <dbReference type="Rhea" id="RHEA:11061"/>
    </physiologicalReaction>
</comment>
<comment type="subcellular location">
    <subcellularLocation>
        <location evidence="3">Mitochondrion matrix</location>
    </subcellularLocation>
</comment>
<comment type="similarity">
    <text evidence="3">Belongs to the class-I aminoacyl-tRNA synthetase family.</text>
</comment>
<keyword id="KW-0030">Aminoacyl-tRNA synthetase</keyword>
<keyword id="KW-0067">ATP-binding</keyword>
<keyword id="KW-0436">Ligase</keyword>
<keyword id="KW-0496">Mitochondrion</keyword>
<keyword id="KW-0547">Nucleotide-binding</keyword>
<keyword id="KW-0648">Protein biosynthesis</keyword>
<keyword id="KW-1185">Reference proteome</keyword>
<keyword id="KW-0809">Transit peptide</keyword>
<organism>
    <name type="scientific">Gallus gallus</name>
    <name type="common">Chicken</name>
    <dbReference type="NCBI Taxonomy" id="9031"/>
    <lineage>
        <taxon>Eukaryota</taxon>
        <taxon>Metazoa</taxon>
        <taxon>Chordata</taxon>
        <taxon>Craniata</taxon>
        <taxon>Vertebrata</taxon>
        <taxon>Euteleostomi</taxon>
        <taxon>Archelosauria</taxon>
        <taxon>Archosauria</taxon>
        <taxon>Dinosauria</taxon>
        <taxon>Saurischia</taxon>
        <taxon>Theropoda</taxon>
        <taxon>Coelurosauria</taxon>
        <taxon>Aves</taxon>
        <taxon>Neognathae</taxon>
        <taxon>Galloanserae</taxon>
        <taxon>Galliformes</taxon>
        <taxon>Phasianidae</taxon>
        <taxon>Phasianinae</taxon>
        <taxon>Gallus</taxon>
    </lineage>
</organism>